<feature type="chain" id="PRO_0000334706" description="Ribosome-binding factor A">
    <location>
        <begin position="1"/>
        <end position="157"/>
    </location>
</feature>
<feature type="region of interest" description="Disordered" evidence="2">
    <location>
        <begin position="127"/>
        <end position="157"/>
    </location>
</feature>
<feature type="compositionally biased region" description="Acidic residues" evidence="2">
    <location>
        <begin position="135"/>
        <end position="157"/>
    </location>
</feature>
<evidence type="ECO:0000255" key="1">
    <source>
        <dbReference type="HAMAP-Rule" id="MF_00003"/>
    </source>
</evidence>
<evidence type="ECO:0000256" key="2">
    <source>
        <dbReference type="SAM" id="MobiDB-lite"/>
    </source>
</evidence>
<protein>
    <recommendedName>
        <fullName evidence="1">Ribosome-binding factor A</fullName>
    </recommendedName>
</protein>
<organism>
    <name type="scientific">Shewanella baltica (strain OS195)</name>
    <dbReference type="NCBI Taxonomy" id="399599"/>
    <lineage>
        <taxon>Bacteria</taxon>
        <taxon>Pseudomonadati</taxon>
        <taxon>Pseudomonadota</taxon>
        <taxon>Gammaproteobacteria</taxon>
        <taxon>Alteromonadales</taxon>
        <taxon>Shewanellaceae</taxon>
        <taxon>Shewanella</taxon>
    </lineage>
</organism>
<dbReference type="EMBL" id="CP000891">
    <property type="protein sequence ID" value="ABX50578.1"/>
    <property type="molecule type" value="Genomic_DNA"/>
</dbReference>
<dbReference type="SMR" id="A9KZX0"/>
<dbReference type="KEGG" id="sbn:Sbal195_3416"/>
<dbReference type="HOGENOM" id="CLU_089475_5_0_6"/>
<dbReference type="Proteomes" id="UP000000770">
    <property type="component" value="Chromosome"/>
</dbReference>
<dbReference type="GO" id="GO:0005829">
    <property type="term" value="C:cytosol"/>
    <property type="evidence" value="ECO:0007669"/>
    <property type="project" value="TreeGrafter"/>
</dbReference>
<dbReference type="GO" id="GO:0043024">
    <property type="term" value="F:ribosomal small subunit binding"/>
    <property type="evidence" value="ECO:0007669"/>
    <property type="project" value="TreeGrafter"/>
</dbReference>
<dbReference type="GO" id="GO:0030490">
    <property type="term" value="P:maturation of SSU-rRNA"/>
    <property type="evidence" value="ECO:0007669"/>
    <property type="project" value="UniProtKB-UniRule"/>
</dbReference>
<dbReference type="FunFam" id="3.30.300.20:FF:000007">
    <property type="entry name" value="Ribosome-binding factor A"/>
    <property type="match status" value="1"/>
</dbReference>
<dbReference type="Gene3D" id="3.30.300.20">
    <property type="match status" value="1"/>
</dbReference>
<dbReference type="HAMAP" id="MF_00003">
    <property type="entry name" value="RbfA"/>
    <property type="match status" value="1"/>
</dbReference>
<dbReference type="InterPro" id="IPR015946">
    <property type="entry name" value="KH_dom-like_a/b"/>
</dbReference>
<dbReference type="InterPro" id="IPR000238">
    <property type="entry name" value="RbfA"/>
</dbReference>
<dbReference type="InterPro" id="IPR023799">
    <property type="entry name" value="RbfA_dom_sf"/>
</dbReference>
<dbReference type="InterPro" id="IPR020053">
    <property type="entry name" value="Ribosome-bd_factorA_CS"/>
</dbReference>
<dbReference type="NCBIfam" id="TIGR00082">
    <property type="entry name" value="rbfA"/>
    <property type="match status" value="1"/>
</dbReference>
<dbReference type="PANTHER" id="PTHR33515">
    <property type="entry name" value="RIBOSOME-BINDING FACTOR A, CHLOROPLASTIC-RELATED"/>
    <property type="match status" value="1"/>
</dbReference>
<dbReference type="PANTHER" id="PTHR33515:SF1">
    <property type="entry name" value="RIBOSOME-BINDING FACTOR A, CHLOROPLASTIC-RELATED"/>
    <property type="match status" value="1"/>
</dbReference>
<dbReference type="Pfam" id="PF02033">
    <property type="entry name" value="RBFA"/>
    <property type="match status" value="1"/>
</dbReference>
<dbReference type="SUPFAM" id="SSF89919">
    <property type="entry name" value="Ribosome-binding factor A, RbfA"/>
    <property type="match status" value="1"/>
</dbReference>
<dbReference type="PROSITE" id="PS01319">
    <property type="entry name" value="RBFA"/>
    <property type="match status" value="1"/>
</dbReference>
<proteinExistence type="inferred from homology"/>
<gene>
    <name evidence="1" type="primary">rbfA</name>
    <name type="ordered locus">Sbal195_3416</name>
</gene>
<accession>A9KZX0</accession>
<comment type="function">
    <text evidence="1">One of several proteins that assist in the late maturation steps of the functional core of the 30S ribosomal subunit. Associates with free 30S ribosomal subunits (but not with 30S subunits that are part of 70S ribosomes or polysomes). Required for efficient processing of 16S rRNA. May interact with the 5'-terminal helix region of 16S rRNA.</text>
</comment>
<comment type="subunit">
    <text evidence="1">Monomer. Binds 30S ribosomal subunits, but not 50S ribosomal subunits or 70S ribosomes.</text>
</comment>
<comment type="subcellular location">
    <subcellularLocation>
        <location evidence="1">Cytoplasm</location>
    </subcellularLocation>
</comment>
<comment type="similarity">
    <text evidence="1">Belongs to the RbfA family.</text>
</comment>
<name>RBFA_SHEB9</name>
<sequence>MVRNIMAKEFSRTRRIAQQLQQELAQVLQRDMKDPRIGFVTVNDVDVSRDLSYAKVFVTFFEEDKAVVQEKLNALISAAPYIRTLVAGRMKLRVMPELRFIYDSSLVEGMRMSNLVSQVINQDKAKQQQFGSEEASVEDEVLGDDVADDADETEGKD</sequence>
<keyword id="KW-0963">Cytoplasm</keyword>
<keyword id="KW-0690">Ribosome biogenesis</keyword>
<reference key="1">
    <citation type="submission" date="2007-11" db="EMBL/GenBank/DDBJ databases">
        <title>Complete sequence of chromosome of Shewanella baltica OS195.</title>
        <authorList>
            <consortium name="US DOE Joint Genome Institute"/>
            <person name="Copeland A."/>
            <person name="Lucas S."/>
            <person name="Lapidus A."/>
            <person name="Barry K."/>
            <person name="Glavina del Rio T."/>
            <person name="Dalin E."/>
            <person name="Tice H."/>
            <person name="Pitluck S."/>
            <person name="Chain P."/>
            <person name="Malfatti S."/>
            <person name="Shin M."/>
            <person name="Vergez L."/>
            <person name="Schmutz J."/>
            <person name="Larimer F."/>
            <person name="Land M."/>
            <person name="Hauser L."/>
            <person name="Kyrpides N."/>
            <person name="Kim E."/>
            <person name="Brettar I."/>
            <person name="Rodrigues J."/>
            <person name="Konstantinidis K."/>
            <person name="Klappenbach J."/>
            <person name="Hofle M."/>
            <person name="Tiedje J."/>
            <person name="Richardson P."/>
        </authorList>
    </citation>
    <scope>NUCLEOTIDE SEQUENCE [LARGE SCALE GENOMIC DNA]</scope>
    <source>
        <strain>OS195</strain>
    </source>
</reference>